<evidence type="ECO:0000255" key="1"/>
<evidence type="ECO:0000256" key="2">
    <source>
        <dbReference type="SAM" id="MobiDB-lite"/>
    </source>
</evidence>
<evidence type="ECO:0000305" key="3"/>
<evidence type="ECO:0000312" key="4">
    <source>
        <dbReference type="HGNC" id="HGNC:27549"/>
    </source>
</evidence>
<name>GREP1_HUMAN</name>
<proteinExistence type="inferred from homology"/>
<dbReference type="EMBL" id="AC004233">
    <property type="status" value="NOT_ANNOTATED_CDS"/>
    <property type="molecule type" value="Genomic_DNA"/>
</dbReference>
<dbReference type="GlyGen" id="A0A0J9YXV3">
    <property type="glycosylation" value="2 sites"/>
</dbReference>
<dbReference type="BioMuta" id="ENSG00000270168"/>
<dbReference type="MassIVE" id="A0A0J9YXV3"/>
<dbReference type="PeptideAtlas" id="A0A0J9YXV3"/>
<dbReference type="Ensembl" id="ENST00000573315.2">
    <property type="protein sequence ID" value="ENSP00000488558.1"/>
    <property type="gene ID" value="ENSG00000262152.8"/>
</dbReference>
<dbReference type="AGR" id="HGNC:27549"/>
<dbReference type="GeneCards" id="GREP1"/>
<dbReference type="HGNC" id="HGNC:27549">
    <property type="gene designation" value="GREP1"/>
</dbReference>
<dbReference type="OpenTargets" id="ENSG00000262152"/>
<dbReference type="VEuPathDB" id="HostDB:ENSG00000262152"/>
<dbReference type="GeneTree" id="ENSGT00730000111940"/>
<dbReference type="InParanoid" id="A0A0J9YXV3"/>
<dbReference type="OMA" id="PMPAIQW"/>
<dbReference type="PAN-GO" id="A0A0J9YXV3">
    <property type="GO annotations" value="0 GO annotations based on evolutionary models"/>
</dbReference>
<dbReference type="PRO" id="PR:A0A0J9YXV3"/>
<dbReference type="Proteomes" id="UP000005640">
    <property type="component" value="Chromosome 16"/>
</dbReference>
<dbReference type="RNAct" id="A0A0J9YXV3">
    <property type="molecule type" value="protein"/>
</dbReference>
<dbReference type="Bgee" id="ENSG00000262152">
    <property type="expression patterns" value="Expressed in lateral globus pallidus and 104 other cell types or tissues"/>
</dbReference>
<feature type="signal peptide" evidence="1">
    <location>
        <begin position="1"/>
        <end position="22"/>
    </location>
</feature>
<feature type="chain" id="PRO_5005326184" description="Glycine-rich extracellular protein 1" evidence="1">
    <location>
        <begin position="23"/>
        <end position="536"/>
    </location>
</feature>
<feature type="region of interest" description="Disordered" evidence="2">
    <location>
        <begin position="111"/>
        <end position="134"/>
    </location>
</feature>
<feature type="region of interest" description="Disordered" evidence="2">
    <location>
        <begin position="306"/>
        <end position="336"/>
    </location>
</feature>
<feature type="region of interest" description="Disordered" evidence="2">
    <location>
        <begin position="500"/>
        <end position="536"/>
    </location>
</feature>
<feature type="compositionally biased region" description="Gly residues" evidence="2">
    <location>
        <begin position="115"/>
        <end position="124"/>
    </location>
</feature>
<feature type="compositionally biased region" description="Gly residues" evidence="2">
    <location>
        <begin position="521"/>
        <end position="536"/>
    </location>
</feature>
<keyword id="KW-1185">Reference proteome</keyword>
<keyword id="KW-0732">Signal</keyword>
<protein>
    <recommendedName>
        <fullName evidence="3">Glycine-rich extracellular protein 1</fullName>
    </recommendedName>
    <alternativeName>
        <fullName evidence="4">Long intergenic non-protein coding RNA 514</fullName>
    </alternativeName>
</protein>
<accession>A0A0J9YXV3</accession>
<reference key="1">
    <citation type="journal article" date="2004" name="Nature">
        <title>The sequence and analysis of duplication-rich human chromosome 16.</title>
        <authorList>
            <person name="Martin J."/>
            <person name="Han C."/>
            <person name="Gordon L.A."/>
            <person name="Terry A."/>
            <person name="Prabhakar S."/>
            <person name="She X."/>
            <person name="Xie G."/>
            <person name="Hellsten U."/>
            <person name="Chan Y.M."/>
            <person name="Altherr M."/>
            <person name="Couronne O."/>
            <person name="Aerts A."/>
            <person name="Bajorek E."/>
            <person name="Black S."/>
            <person name="Blumer H."/>
            <person name="Branscomb E."/>
            <person name="Brown N.C."/>
            <person name="Bruno W.J."/>
            <person name="Buckingham J.M."/>
            <person name="Callen D.F."/>
            <person name="Campbell C.S."/>
            <person name="Campbell M.L."/>
            <person name="Campbell E.W."/>
            <person name="Caoile C."/>
            <person name="Challacombe J.F."/>
            <person name="Chasteen L.A."/>
            <person name="Chertkov O."/>
            <person name="Chi H.C."/>
            <person name="Christensen M."/>
            <person name="Clark L.M."/>
            <person name="Cohn J.D."/>
            <person name="Denys M."/>
            <person name="Detter J.C."/>
            <person name="Dickson M."/>
            <person name="Dimitrijevic-Bussod M."/>
            <person name="Escobar J."/>
            <person name="Fawcett J.J."/>
            <person name="Flowers D."/>
            <person name="Fotopulos D."/>
            <person name="Glavina T."/>
            <person name="Gomez M."/>
            <person name="Gonzales E."/>
            <person name="Goodstein D."/>
            <person name="Goodwin L.A."/>
            <person name="Grady D.L."/>
            <person name="Grigoriev I."/>
            <person name="Groza M."/>
            <person name="Hammon N."/>
            <person name="Hawkins T."/>
            <person name="Haydu L."/>
            <person name="Hildebrand C.E."/>
            <person name="Huang W."/>
            <person name="Israni S."/>
            <person name="Jett J."/>
            <person name="Jewett P.B."/>
            <person name="Kadner K."/>
            <person name="Kimball H."/>
            <person name="Kobayashi A."/>
            <person name="Krawczyk M.-C."/>
            <person name="Leyba T."/>
            <person name="Longmire J.L."/>
            <person name="Lopez F."/>
            <person name="Lou Y."/>
            <person name="Lowry S."/>
            <person name="Ludeman T."/>
            <person name="Manohar C.F."/>
            <person name="Mark G.A."/>
            <person name="McMurray K.L."/>
            <person name="Meincke L.J."/>
            <person name="Morgan J."/>
            <person name="Moyzis R.K."/>
            <person name="Mundt M.O."/>
            <person name="Munk A.C."/>
            <person name="Nandkeshwar R.D."/>
            <person name="Pitluck S."/>
            <person name="Pollard M."/>
            <person name="Predki P."/>
            <person name="Parson-Quintana B."/>
            <person name="Ramirez L."/>
            <person name="Rash S."/>
            <person name="Retterer J."/>
            <person name="Ricke D.O."/>
            <person name="Robinson D.L."/>
            <person name="Rodriguez A."/>
            <person name="Salamov A."/>
            <person name="Saunders E.H."/>
            <person name="Scott D."/>
            <person name="Shough T."/>
            <person name="Stallings R.L."/>
            <person name="Stalvey M."/>
            <person name="Sutherland R.D."/>
            <person name="Tapia R."/>
            <person name="Tesmer J.G."/>
            <person name="Thayer N."/>
            <person name="Thompson L.S."/>
            <person name="Tice H."/>
            <person name="Torney D.C."/>
            <person name="Tran-Gyamfi M."/>
            <person name="Tsai M."/>
            <person name="Ulanovsky L.E."/>
            <person name="Ustaszewska A."/>
            <person name="Vo N."/>
            <person name="White P.S."/>
            <person name="Williams A.L."/>
            <person name="Wills P.L."/>
            <person name="Wu J.-R."/>
            <person name="Wu K."/>
            <person name="Yang J."/>
            <person name="DeJong P."/>
            <person name="Bruce D."/>
            <person name="Doggett N.A."/>
            <person name="Deaven L."/>
            <person name="Schmutz J."/>
            <person name="Grimwood J."/>
            <person name="Richardson P."/>
            <person name="Rokhsar D.S."/>
            <person name="Eichler E.E."/>
            <person name="Gilna P."/>
            <person name="Lucas S.M."/>
            <person name="Myers R.M."/>
            <person name="Rubin E.M."/>
            <person name="Pennacchio L.A."/>
        </authorList>
    </citation>
    <scope>NUCLEOTIDE SEQUENCE [LARGE SCALE GENOMIC DNA]</scope>
</reference>
<sequence length="536" mass="54285">MGAWAFPAALFLLCLTSESLQGGLPLLPPGLGKVYGPHSGLGAGYDGGVKPQKPGFVVRHGLGTQPDTEGGMKPQNLGFRTFAGAAAQPGYGNGLGAAAFPVAGAQSGPAAQNGFGPGFGGGGKPQKPGPTTQNGYRPGYVGAVKPQKPGFQYRIGLGAQPGFRGDMKAQEPGLGNGNGLSAQPVLTAQNRFGFGAGLGGNVKPLKPGYGKRLRAGAFPGAGTQPEYGHGNGPGVQPGLGAGMKPQMPGLGAPNGYGPGRGRAGVPGGPERRPWVPHLLPFSSPGYLGVMKAQKPGPLAQNGYRAGAGEGMKPQKPGLRGTLKPQKSGHGHENGPWPGPCNARVAPMLLPRLPTPGVPSDKEGGWGLKSQPPSAVQNGKLPAPMPAIQWGLKPQKAGHQPPNGYGPGAEPGFNGGLEPQKIGLGYGNGVLGARVFPEAHPQPGFHGANGFRNRDGVEALVYPKAAALAPEGNGQAGVLWNSRWPTLQAWGAGLKPGYQAGDEYAEARSQPGGPDVKRGSNGQLGNGYGGRCPLGKC</sequence>
<gene>
    <name evidence="4" type="primary">GREP1</name>
    <name evidence="4" type="synonym">LINC00514</name>
</gene>
<organism>
    <name type="scientific">Homo sapiens</name>
    <name type="common">Human</name>
    <dbReference type="NCBI Taxonomy" id="9606"/>
    <lineage>
        <taxon>Eukaryota</taxon>
        <taxon>Metazoa</taxon>
        <taxon>Chordata</taxon>
        <taxon>Craniata</taxon>
        <taxon>Vertebrata</taxon>
        <taxon>Euteleostomi</taxon>
        <taxon>Mammalia</taxon>
        <taxon>Eutheria</taxon>
        <taxon>Euarchontoglires</taxon>
        <taxon>Primates</taxon>
        <taxon>Haplorrhini</taxon>
        <taxon>Catarrhini</taxon>
        <taxon>Hominidae</taxon>
        <taxon>Homo</taxon>
    </lineage>
</organism>